<name>RGXC_NEOFI</name>
<sequence>MRFSIISLVSLPLFLGLTYAGGVEKDERNNVCTVKANGKQKDDMPNLFKAFKECGNGGTIIFPEDQSYWIGTRLNPLLNDVTVQWRGKWTFSDNLDYRRNNSFPVAFQNHRVGFIISGHNVTIDGNGNTWYTAEKGVTQSGRPMPFVFWNVSEVNVENFYVKDPPLWSLNIMNGTNMRFNNIYCNATSVDAPYGYNWVQNTDGFGSFSAVNTMDAVNIQLTNFVYQGGDDCITIKPRSYNIDIQNVTCVGGNGIAVGSLGQYLEDSSVENVRVDKVKIIRYNEDMHNSAYIKTWVGALVPQSSYESAGLPCGGGWGNVRNILFSNFEVQGANAGPSVNQDSGNNGSYSGSSLMTVSNIVFANFTGYTSGGTSVTSKVSCSEVHPCYNIEFDDVLLYPGKNASNLGTGSCKYTANGGVHGLEGC</sequence>
<accession>A1D415</accession>
<reference key="1">
    <citation type="journal article" date="2008" name="PLoS Genet.">
        <title>Genomic islands in the pathogenic filamentous fungus Aspergillus fumigatus.</title>
        <authorList>
            <person name="Fedorova N.D."/>
            <person name="Khaldi N."/>
            <person name="Joardar V.S."/>
            <person name="Maiti R."/>
            <person name="Amedeo P."/>
            <person name="Anderson M.J."/>
            <person name="Crabtree J."/>
            <person name="Silva J.C."/>
            <person name="Badger J.H."/>
            <person name="Albarraq A."/>
            <person name="Angiuoli S."/>
            <person name="Bussey H."/>
            <person name="Bowyer P."/>
            <person name="Cotty P.J."/>
            <person name="Dyer P.S."/>
            <person name="Egan A."/>
            <person name="Galens K."/>
            <person name="Fraser-Liggett C.M."/>
            <person name="Haas B.J."/>
            <person name="Inman J.M."/>
            <person name="Kent R."/>
            <person name="Lemieux S."/>
            <person name="Malavazi I."/>
            <person name="Orvis J."/>
            <person name="Roemer T."/>
            <person name="Ronning C.M."/>
            <person name="Sundaram J.P."/>
            <person name="Sutton G."/>
            <person name="Turner G."/>
            <person name="Venter J.C."/>
            <person name="White O.R."/>
            <person name="Whitty B.R."/>
            <person name="Youngman P."/>
            <person name="Wolfe K.H."/>
            <person name="Goldman G.H."/>
            <person name="Wortman J.R."/>
            <person name="Jiang B."/>
            <person name="Denning D.W."/>
            <person name="Nierman W.C."/>
        </authorList>
    </citation>
    <scope>NUCLEOTIDE SEQUENCE [LARGE SCALE GENOMIC DNA]</scope>
    <source>
        <strain>ATCC 1020 / DSM 3700 / CBS 544.65 / FGSC A1164 / JCM 1740 / NRRL 181 / WB 181</strain>
    </source>
</reference>
<evidence type="ECO:0000250" key="1"/>
<evidence type="ECO:0000250" key="2">
    <source>
        <dbReference type="UniProtKB" id="O74213"/>
    </source>
</evidence>
<evidence type="ECO:0000255" key="3"/>
<evidence type="ECO:0000255" key="4">
    <source>
        <dbReference type="PROSITE-ProRule" id="PRU00498"/>
    </source>
</evidence>
<evidence type="ECO:0000305" key="5"/>
<organism>
    <name type="scientific">Neosartorya fischeri (strain ATCC 1020 / DSM 3700 / CBS 544.65 / FGSC A1164 / JCM 1740 / NRRL 181 / WB 181)</name>
    <name type="common">Aspergillus fischerianus</name>
    <dbReference type="NCBI Taxonomy" id="331117"/>
    <lineage>
        <taxon>Eukaryota</taxon>
        <taxon>Fungi</taxon>
        <taxon>Dikarya</taxon>
        <taxon>Ascomycota</taxon>
        <taxon>Pezizomycotina</taxon>
        <taxon>Eurotiomycetes</taxon>
        <taxon>Eurotiomycetidae</taxon>
        <taxon>Eurotiales</taxon>
        <taxon>Aspergillaceae</taxon>
        <taxon>Aspergillus</taxon>
        <taxon>Aspergillus subgen. Fumigati</taxon>
    </lineage>
</organism>
<dbReference type="EC" id="3.2.1.67"/>
<dbReference type="EMBL" id="DS027688">
    <property type="protein sequence ID" value="EAW23158.1"/>
    <property type="molecule type" value="Genomic_DNA"/>
</dbReference>
<dbReference type="RefSeq" id="XP_001265055.1">
    <property type="nucleotide sequence ID" value="XM_001265054.1"/>
</dbReference>
<dbReference type="SMR" id="A1D415"/>
<dbReference type="STRING" id="331117.A1D415"/>
<dbReference type="GlyCosmos" id="A1D415">
    <property type="glycosylation" value="9 sites, No reported glycans"/>
</dbReference>
<dbReference type="EnsemblFungi" id="EAW23158">
    <property type="protein sequence ID" value="EAW23158"/>
    <property type="gene ID" value="NFIA_018590"/>
</dbReference>
<dbReference type="GeneID" id="4591724"/>
<dbReference type="KEGG" id="nfi:NFIA_018590"/>
<dbReference type="VEuPathDB" id="FungiDB:NFIA_018590"/>
<dbReference type="eggNOG" id="ENOG502QVQ1">
    <property type="taxonomic scope" value="Eukaryota"/>
</dbReference>
<dbReference type="HOGENOM" id="CLU_016031_1_1_1"/>
<dbReference type="OMA" id="FWNVSEV"/>
<dbReference type="OrthoDB" id="339764at2759"/>
<dbReference type="Proteomes" id="UP000006702">
    <property type="component" value="Unassembled WGS sequence"/>
</dbReference>
<dbReference type="GO" id="GO:0005576">
    <property type="term" value="C:extracellular region"/>
    <property type="evidence" value="ECO:0007669"/>
    <property type="project" value="UniProtKB-SubCell"/>
</dbReference>
<dbReference type="GO" id="GO:0047911">
    <property type="term" value="F:galacturan 1,4-alpha-galacturonidase activity"/>
    <property type="evidence" value="ECO:0007669"/>
    <property type="project" value="UniProtKB-EC"/>
</dbReference>
<dbReference type="GO" id="GO:0004650">
    <property type="term" value="F:polygalacturonase activity"/>
    <property type="evidence" value="ECO:0007669"/>
    <property type="project" value="InterPro"/>
</dbReference>
<dbReference type="GO" id="GO:0071555">
    <property type="term" value="P:cell wall organization"/>
    <property type="evidence" value="ECO:0007669"/>
    <property type="project" value="UniProtKB-KW"/>
</dbReference>
<dbReference type="GO" id="GO:0000272">
    <property type="term" value="P:polysaccharide catabolic process"/>
    <property type="evidence" value="ECO:0007669"/>
    <property type="project" value="UniProtKB-KW"/>
</dbReference>
<dbReference type="Gene3D" id="2.160.20.10">
    <property type="entry name" value="Single-stranded right-handed beta-helix, Pectin lyase-like"/>
    <property type="match status" value="1"/>
</dbReference>
<dbReference type="InterPro" id="IPR000743">
    <property type="entry name" value="Glyco_hydro_28"/>
</dbReference>
<dbReference type="InterPro" id="IPR012334">
    <property type="entry name" value="Pectin_lyas_fold"/>
</dbReference>
<dbReference type="InterPro" id="IPR011050">
    <property type="entry name" value="Pectin_lyase_fold/virulence"/>
</dbReference>
<dbReference type="PANTHER" id="PTHR31736">
    <property type="match status" value="1"/>
</dbReference>
<dbReference type="PANTHER" id="PTHR31736:SF12">
    <property type="entry name" value="EXO-POLYGALACTURONASE, PUTATIVE-RELATED"/>
    <property type="match status" value="1"/>
</dbReference>
<dbReference type="Pfam" id="PF00295">
    <property type="entry name" value="Glyco_hydro_28"/>
    <property type="match status" value="1"/>
</dbReference>
<dbReference type="SUPFAM" id="SSF51126">
    <property type="entry name" value="Pectin lyase-like"/>
    <property type="match status" value="1"/>
</dbReference>
<proteinExistence type="inferred from homology"/>
<feature type="signal peptide" evidence="3">
    <location>
        <begin position="1"/>
        <end position="20"/>
    </location>
</feature>
<feature type="chain" id="PRO_0000395081" description="Putative galacturan 1,4-alpha-galacturonidase C">
    <location>
        <begin position="21"/>
        <end position="423"/>
    </location>
</feature>
<feature type="active site" description="Proton donor" evidence="2">
    <location>
        <position position="229"/>
    </location>
</feature>
<feature type="active site" evidence="2">
    <location>
        <position position="252"/>
    </location>
</feature>
<feature type="glycosylation site" description="N-linked (GlcNAc...) asparagine" evidence="4">
    <location>
        <position position="100"/>
    </location>
</feature>
<feature type="glycosylation site" description="N-linked (GlcNAc...) asparagine" evidence="4">
    <location>
        <position position="120"/>
    </location>
</feature>
<feature type="glycosylation site" description="N-linked (GlcNAc...) asparagine" evidence="4">
    <location>
        <position position="150"/>
    </location>
</feature>
<feature type="glycosylation site" description="N-linked (GlcNAc...) asparagine" evidence="4">
    <location>
        <position position="173"/>
    </location>
</feature>
<feature type="glycosylation site" description="N-linked (GlcNAc...) asparagine" evidence="4">
    <location>
        <position position="185"/>
    </location>
</feature>
<feature type="glycosylation site" description="N-linked (GlcNAc...) asparagine" evidence="4">
    <location>
        <position position="245"/>
    </location>
</feature>
<feature type="glycosylation site" description="N-linked (GlcNAc...) asparagine" evidence="4">
    <location>
        <position position="344"/>
    </location>
</feature>
<feature type="glycosylation site" description="N-linked (GlcNAc...) asparagine" evidence="4">
    <location>
        <position position="362"/>
    </location>
</feature>
<feature type="glycosylation site" description="N-linked (GlcNAc...) asparagine" evidence="4">
    <location>
        <position position="400"/>
    </location>
</feature>
<feature type="disulfide bond" evidence="2">
    <location>
        <begin position="231"/>
        <end position="248"/>
    </location>
</feature>
<feature type="disulfide bond" evidence="2">
    <location>
        <begin position="379"/>
        <end position="385"/>
    </location>
</feature>
<feature type="disulfide bond" evidence="2">
    <location>
        <begin position="409"/>
        <end position="423"/>
    </location>
</feature>
<comment type="function">
    <text evidence="1">Specific in hydrolyzing the terminal glycosidic bond of polygalacturonic acid and oligogalacturonates.</text>
</comment>
<comment type="catalytic activity">
    <reaction>
        <text>[(1-&gt;4)-alpha-D-galacturonosyl](n) + H2O = alpha-D-galacturonate + [(1-&gt;4)-alpha-D-galacturonosyl](n-1)</text>
        <dbReference type="Rhea" id="RHEA:14117"/>
        <dbReference type="Rhea" id="RHEA-COMP:14570"/>
        <dbReference type="Rhea" id="RHEA-COMP:14572"/>
        <dbReference type="ChEBI" id="CHEBI:15377"/>
        <dbReference type="ChEBI" id="CHEBI:58658"/>
        <dbReference type="ChEBI" id="CHEBI:140523"/>
        <dbReference type="EC" id="3.2.1.67"/>
    </reaction>
</comment>
<comment type="subcellular location">
    <subcellularLocation>
        <location evidence="1">Secreted</location>
    </subcellularLocation>
</comment>
<comment type="similarity">
    <text evidence="5">Belongs to the glycosyl hydrolase 28 family.</text>
</comment>
<keyword id="KW-0119">Carbohydrate metabolism</keyword>
<keyword id="KW-0961">Cell wall biogenesis/degradation</keyword>
<keyword id="KW-1015">Disulfide bond</keyword>
<keyword id="KW-0325">Glycoprotein</keyword>
<keyword id="KW-0326">Glycosidase</keyword>
<keyword id="KW-0378">Hydrolase</keyword>
<keyword id="KW-0624">Polysaccharide degradation</keyword>
<keyword id="KW-1185">Reference proteome</keyword>
<keyword id="KW-0964">Secreted</keyword>
<keyword id="KW-0732">Signal</keyword>
<gene>
    <name type="primary">rgxC</name>
    <name type="ORF">NFIA_018590</name>
</gene>
<protein>
    <recommendedName>
        <fullName>Putative galacturan 1,4-alpha-galacturonidase C</fullName>
        <ecNumber>3.2.1.67</ecNumber>
    </recommendedName>
    <alternativeName>
        <fullName>Exopolygalacturonase C</fullName>
    </alternativeName>
    <alternativeName>
        <fullName>Exorhamnogalacturonase C</fullName>
    </alternativeName>
    <alternativeName>
        <fullName>Poly(1,4-alpha-D-galacturonide)galacturonohydrolase C</fullName>
    </alternativeName>
</protein>